<evidence type="ECO:0000250" key="1"/>
<evidence type="ECO:0000255" key="2"/>
<evidence type="ECO:0000305" key="3"/>
<feature type="signal peptide" evidence="2">
    <location>
        <begin position="1"/>
        <end position="25"/>
    </location>
</feature>
<feature type="chain" id="PRO_0000024873" description="Probable pectate lyase 9">
    <location>
        <begin position="26"/>
        <end position="452"/>
    </location>
</feature>
<feature type="active site" evidence="2">
    <location>
        <position position="330"/>
    </location>
</feature>
<feature type="binding site" evidence="1">
    <location>
        <position position="250"/>
    </location>
    <ligand>
        <name>Ca(2+)</name>
        <dbReference type="ChEBI" id="CHEBI:29108"/>
    </ligand>
</feature>
<feature type="binding site" evidence="1">
    <location>
        <position position="274"/>
    </location>
    <ligand>
        <name>Ca(2+)</name>
        <dbReference type="ChEBI" id="CHEBI:29108"/>
    </ligand>
</feature>
<feature type="binding site" evidence="1">
    <location>
        <position position="278"/>
    </location>
    <ligand>
        <name>Ca(2+)</name>
        <dbReference type="ChEBI" id="CHEBI:29108"/>
    </ligand>
</feature>
<feature type="glycosylation site" description="N-linked (GlcNAc...) asparagine" evidence="2">
    <location>
        <position position="88"/>
    </location>
</feature>
<feature type="glycosylation site" description="N-linked (GlcNAc...) asparagine" evidence="2">
    <location>
        <position position="139"/>
    </location>
</feature>
<feature type="glycosylation site" description="N-linked (GlcNAc...) asparagine" evidence="2">
    <location>
        <position position="214"/>
    </location>
</feature>
<feature type="glycosylation site" description="N-linked (GlcNAc...) asparagine" evidence="2">
    <location>
        <position position="233"/>
    </location>
</feature>
<feature type="glycosylation site" description="N-linked (GlcNAc...) asparagine" evidence="2">
    <location>
        <position position="271"/>
    </location>
</feature>
<feature type="glycosylation site" description="N-linked (GlcNAc...) asparagine" evidence="2">
    <location>
        <position position="281"/>
    </location>
</feature>
<feature type="glycosylation site" description="N-linked (GlcNAc...) asparagine" evidence="2">
    <location>
        <position position="305"/>
    </location>
</feature>
<feature type="glycosylation site" description="N-linked (GlcNAc...) asparagine" evidence="2">
    <location>
        <position position="374"/>
    </location>
</feature>
<feature type="sequence conflict" description="In Ref. 3; BX823056." evidence="3" ref="3">
    <original>H</original>
    <variation>N</variation>
    <location>
        <position position="224"/>
    </location>
</feature>
<feature type="sequence conflict" description="In Ref. 3; BX823056." evidence="3" ref="3">
    <original>D</original>
    <variation>H</variation>
    <location>
        <position position="306"/>
    </location>
</feature>
<feature type="sequence conflict" description="In Ref. 3; BX823056." evidence="3" ref="3">
    <original>G</original>
    <variation>A</variation>
    <location>
        <position position="326"/>
    </location>
</feature>
<feature type="sequence conflict" description="In Ref. 3; BX823056." evidence="3" ref="3">
    <original>Y</original>
    <variation>H</variation>
    <location>
        <position position="338"/>
    </location>
</feature>
<feature type="sequence conflict" description="In Ref. 3; BX823056." evidence="3" ref="3">
    <original>Y</original>
    <variation>H</variation>
    <location>
        <position position="346"/>
    </location>
</feature>
<feature type="sequence conflict" description="In Ref. 3; BX823056." evidence="3" ref="3">
    <original>F</original>
    <variation>S</variation>
    <location>
        <position position="408"/>
    </location>
</feature>
<feature type="sequence conflict" description="In Ref. 3; BX823056." evidence="3" ref="3">
    <original>D</original>
    <variation>H</variation>
    <location>
        <position position="419"/>
    </location>
</feature>
<keyword id="KW-0106">Calcium</keyword>
<keyword id="KW-0325">Glycoprotein</keyword>
<keyword id="KW-0456">Lyase</keyword>
<keyword id="KW-0479">Metal-binding</keyword>
<keyword id="KW-1185">Reference proteome</keyword>
<keyword id="KW-0732">Signal</keyword>
<comment type="catalytic activity">
    <reaction>
        <text>Eliminative cleavage of (1-&gt;4)-alpha-D-galacturonan to give oligosaccharides with 4-deoxy-alpha-D-galact-4-enuronosyl groups at their non-reducing ends.</text>
        <dbReference type="EC" id="4.2.2.2"/>
    </reaction>
</comment>
<comment type="cofactor">
    <cofactor evidence="1">
        <name>Ca(2+)</name>
        <dbReference type="ChEBI" id="CHEBI:29108"/>
    </cofactor>
    <text evidence="1">Binds 1 Ca(2+) ion. Required for its activity.</text>
</comment>
<comment type="pathway">
    <text>Glycan metabolism; pectin degradation; 2-dehydro-3-deoxy-D-gluconate from pectin: step 2/5.</text>
</comment>
<comment type="similarity">
    <text evidence="3">Belongs to the polysaccharide lyase 1 family.</text>
</comment>
<proteinExistence type="evidence at transcript level"/>
<dbReference type="EC" id="4.2.2.2"/>
<dbReference type="EMBL" id="AB028621">
    <property type="protein sequence ID" value="BAB01365.1"/>
    <property type="molecule type" value="Genomic_DNA"/>
</dbReference>
<dbReference type="EMBL" id="CP002686">
    <property type="protein sequence ID" value="AEE76877.1"/>
    <property type="molecule type" value="Genomic_DNA"/>
</dbReference>
<dbReference type="EMBL" id="BX823056">
    <property type="status" value="NOT_ANNOTATED_CDS"/>
    <property type="molecule type" value="mRNA"/>
</dbReference>
<dbReference type="RefSeq" id="NP_189065.2">
    <property type="nucleotide sequence ID" value="NM_113328.3"/>
</dbReference>
<dbReference type="SMR" id="Q9LRM5"/>
<dbReference type="FunCoup" id="Q9LRM5">
    <property type="interactions" value="107"/>
</dbReference>
<dbReference type="STRING" id="3702.Q9LRM5"/>
<dbReference type="CAZy" id="PL1">
    <property type="family name" value="Polysaccharide Lyase Family 1"/>
</dbReference>
<dbReference type="GlyGen" id="Q9LRM5">
    <property type="glycosylation" value="8 sites"/>
</dbReference>
<dbReference type="PaxDb" id="3702-AT3G24230.1"/>
<dbReference type="EnsemblPlants" id="AT3G24230.1">
    <property type="protein sequence ID" value="AT3G24230.1"/>
    <property type="gene ID" value="AT3G24230"/>
</dbReference>
<dbReference type="GeneID" id="822010"/>
<dbReference type="Gramene" id="AT3G24230.1">
    <property type="protein sequence ID" value="AT3G24230.1"/>
    <property type="gene ID" value="AT3G24230"/>
</dbReference>
<dbReference type="KEGG" id="ath:AT3G24230"/>
<dbReference type="Araport" id="AT3G24230"/>
<dbReference type="TAIR" id="AT3G24230"/>
<dbReference type="eggNOG" id="ENOG502QQ5F">
    <property type="taxonomic scope" value="Eukaryota"/>
</dbReference>
<dbReference type="HOGENOM" id="CLU_026608_0_1_1"/>
<dbReference type="InParanoid" id="Q9LRM5"/>
<dbReference type="OMA" id="HMSEQNI"/>
<dbReference type="PhylomeDB" id="Q9LRM5"/>
<dbReference type="BioCyc" id="ARA:AT3G24230-MONOMER"/>
<dbReference type="UniPathway" id="UPA00545">
    <property type="reaction ID" value="UER00824"/>
</dbReference>
<dbReference type="PRO" id="PR:Q9LRM5"/>
<dbReference type="Proteomes" id="UP000006548">
    <property type="component" value="Chromosome 3"/>
</dbReference>
<dbReference type="ExpressionAtlas" id="Q9LRM5">
    <property type="expression patterns" value="baseline and differential"/>
</dbReference>
<dbReference type="GO" id="GO:0046872">
    <property type="term" value="F:metal ion binding"/>
    <property type="evidence" value="ECO:0007669"/>
    <property type="project" value="UniProtKB-KW"/>
</dbReference>
<dbReference type="GO" id="GO:0030570">
    <property type="term" value="F:pectate lyase activity"/>
    <property type="evidence" value="ECO:0007669"/>
    <property type="project" value="UniProtKB-EC"/>
</dbReference>
<dbReference type="GO" id="GO:0045490">
    <property type="term" value="P:pectin catabolic process"/>
    <property type="evidence" value="ECO:0007669"/>
    <property type="project" value="UniProtKB-UniPathway"/>
</dbReference>
<dbReference type="FunFam" id="2.160.20.10:FF:000009">
    <property type="entry name" value="Pectate lyase"/>
    <property type="match status" value="1"/>
</dbReference>
<dbReference type="Gene3D" id="2.160.20.10">
    <property type="entry name" value="Single-stranded right-handed beta-helix, Pectin lyase-like"/>
    <property type="match status" value="1"/>
</dbReference>
<dbReference type="InterPro" id="IPR018082">
    <property type="entry name" value="AmbAllergen"/>
</dbReference>
<dbReference type="InterPro" id="IPR002022">
    <property type="entry name" value="Pec_lyase"/>
</dbReference>
<dbReference type="InterPro" id="IPR012334">
    <property type="entry name" value="Pectin_lyas_fold"/>
</dbReference>
<dbReference type="InterPro" id="IPR011050">
    <property type="entry name" value="Pectin_lyase_fold/virulence"/>
</dbReference>
<dbReference type="InterPro" id="IPR045032">
    <property type="entry name" value="PEL"/>
</dbReference>
<dbReference type="PANTHER" id="PTHR31683:SF196">
    <property type="entry name" value="PECTATE LYASE 15-RELATED"/>
    <property type="match status" value="1"/>
</dbReference>
<dbReference type="PANTHER" id="PTHR31683">
    <property type="entry name" value="PECTATE LYASE 18-RELATED"/>
    <property type="match status" value="1"/>
</dbReference>
<dbReference type="Pfam" id="PF00544">
    <property type="entry name" value="Pectate_lyase_4"/>
    <property type="match status" value="1"/>
</dbReference>
<dbReference type="PRINTS" id="PR00807">
    <property type="entry name" value="AMBALLERGEN"/>
</dbReference>
<dbReference type="SMART" id="SM00656">
    <property type="entry name" value="Amb_all"/>
    <property type="match status" value="1"/>
</dbReference>
<dbReference type="SUPFAM" id="SSF51126">
    <property type="entry name" value="Pectin lyase-like"/>
    <property type="match status" value="1"/>
</dbReference>
<sequence>MATSSLKLTSACFVLLFIFVGCVLTATNLRNNEISRSRKLKTEDSKSFNSSPMTTRLDGVVELNEHAVTDPDKVAHEVSNLIHMSEQNITARRKLGFFSCGNGNLIDDCWRCDRNWNKNRKHLADCGMGFGSKAFGGRNGSYYVVTDHSDDDVVNPKPGTLRHAVIQVEPLWIIFKRDMVIKLKQELIMNSFKTIDARGANVHIANGACITIQNITNVIVHGLHIHDCKRTGNVTVRSSPSQAGFRGTADGDAINIFGSSHIWIDHNSLSNCTDGLVDVVNGSTAITISNNHFTHHDEVMLLGHNDSYTRDKMMQVTVAYNHFGEGLIQRMPRCRHGYFHVVNNDYTHWKMYAIGGSANPTINSQGNRFAAPKNHSAKEVTKRLDTKGNEWMEWNWRSEKDLLVNGAFFTPSGEGASGDSQTLSLPAKPASMVDAITASAGALSCRRGKPCY</sequence>
<gene>
    <name type="ordered locus">At3g24230</name>
    <name type="ORF">MUJ8.14</name>
</gene>
<organism>
    <name type="scientific">Arabidopsis thaliana</name>
    <name type="common">Mouse-ear cress</name>
    <dbReference type="NCBI Taxonomy" id="3702"/>
    <lineage>
        <taxon>Eukaryota</taxon>
        <taxon>Viridiplantae</taxon>
        <taxon>Streptophyta</taxon>
        <taxon>Embryophyta</taxon>
        <taxon>Tracheophyta</taxon>
        <taxon>Spermatophyta</taxon>
        <taxon>Magnoliopsida</taxon>
        <taxon>eudicotyledons</taxon>
        <taxon>Gunneridae</taxon>
        <taxon>Pentapetalae</taxon>
        <taxon>rosids</taxon>
        <taxon>malvids</taxon>
        <taxon>Brassicales</taxon>
        <taxon>Brassicaceae</taxon>
        <taxon>Camelineae</taxon>
        <taxon>Arabidopsis</taxon>
    </lineage>
</organism>
<accession>Q9LRM5</accession>
<reference key="1">
    <citation type="journal article" date="2000" name="DNA Res.">
        <title>Structural analysis of Arabidopsis thaliana chromosome 3. I. Sequence features of the regions of 4,504,864 bp covered by sixty P1 and TAC clones.</title>
        <authorList>
            <person name="Sato S."/>
            <person name="Nakamura Y."/>
            <person name="Kaneko T."/>
            <person name="Katoh T."/>
            <person name="Asamizu E."/>
            <person name="Tabata S."/>
        </authorList>
    </citation>
    <scope>NUCLEOTIDE SEQUENCE [LARGE SCALE GENOMIC DNA]</scope>
    <source>
        <strain>cv. Columbia</strain>
    </source>
</reference>
<reference key="2">
    <citation type="journal article" date="2017" name="Plant J.">
        <title>Araport11: a complete reannotation of the Arabidopsis thaliana reference genome.</title>
        <authorList>
            <person name="Cheng C.Y."/>
            <person name="Krishnakumar V."/>
            <person name="Chan A.P."/>
            <person name="Thibaud-Nissen F."/>
            <person name="Schobel S."/>
            <person name="Town C.D."/>
        </authorList>
    </citation>
    <scope>GENOME REANNOTATION</scope>
    <source>
        <strain>cv. Columbia</strain>
    </source>
</reference>
<reference key="3">
    <citation type="journal article" date="2004" name="Genome Res.">
        <title>Whole genome sequence comparisons and 'full-length' cDNA sequences: a combined approach to evaluate and improve Arabidopsis genome annotation.</title>
        <authorList>
            <person name="Castelli V."/>
            <person name="Aury J.-M."/>
            <person name="Jaillon O."/>
            <person name="Wincker P."/>
            <person name="Clepet C."/>
            <person name="Menard M."/>
            <person name="Cruaud C."/>
            <person name="Quetier F."/>
            <person name="Scarpelli C."/>
            <person name="Schaechter V."/>
            <person name="Temple G."/>
            <person name="Caboche M."/>
            <person name="Weissenbach J."/>
            <person name="Salanoubat M."/>
        </authorList>
    </citation>
    <scope>NUCLEOTIDE SEQUENCE [LARGE SCALE MRNA]</scope>
    <source>
        <strain>cv. Columbia</strain>
    </source>
</reference>
<name>PLY9_ARATH</name>
<protein>
    <recommendedName>
        <fullName>Probable pectate lyase 9</fullName>
        <ecNumber>4.2.2.2</ecNumber>
    </recommendedName>
</protein>